<comment type="function">
    <text evidence="1">The RecF protein is involved in DNA metabolism; it is required for DNA replication and normal SOS inducibility. RecF binds preferentially to single-stranded, linear DNA. It also seems to bind ATP.</text>
</comment>
<comment type="subcellular location">
    <subcellularLocation>
        <location evidence="1">Cytoplasm</location>
    </subcellularLocation>
</comment>
<comment type="similarity">
    <text evidence="1">Belongs to the RecF family.</text>
</comment>
<reference key="1">
    <citation type="journal article" date="2007" name="Genome Res.">
        <title>Lateral gene transfer between obligate intracellular bacteria: evidence from the Rickettsia massiliae genome.</title>
        <authorList>
            <person name="Blanc G."/>
            <person name="Ogata H."/>
            <person name="Robert C."/>
            <person name="Audic S."/>
            <person name="Claverie J.-M."/>
            <person name="Raoult D."/>
        </authorList>
    </citation>
    <scope>NUCLEOTIDE SEQUENCE [LARGE SCALE GENOMIC DNA]</scope>
    <source>
        <strain>Mtu5</strain>
    </source>
</reference>
<dbReference type="EMBL" id="CP000683">
    <property type="protein sequence ID" value="ABV84370.1"/>
    <property type="molecule type" value="Genomic_DNA"/>
</dbReference>
<dbReference type="RefSeq" id="WP_012152351.1">
    <property type="nucleotide sequence ID" value="NC_009900.1"/>
</dbReference>
<dbReference type="SMR" id="A8F0D4"/>
<dbReference type="KEGG" id="rms:RMA_0033"/>
<dbReference type="HOGENOM" id="CLU_040267_2_0_5"/>
<dbReference type="Proteomes" id="UP000001311">
    <property type="component" value="Chromosome"/>
</dbReference>
<dbReference type="GO" id="GO:0005737">
    <property type="term" value="C:cytoplasm"/>
    <property type="evidence" value="ECO:0007669"/>
    <property type="project" value="UniProtKB-SubCell"/>
</dbReference>
<dbReference type="GO" id="GO:0005524">
    <property type="term" value="F:ATP binding"/>
    <property type="evidence" value="ECO:0007669"/>
    <property type="project" value="UniProtKB-UniRule"/>
</dbReference>
<dbReference type="GO" id="GO:0003697">
    <property type="term" value="F:single-stranded DNA binding"/>
    <property type="evidence" value="ECO:0007669"/>
    <property type="project" value="UniProtKB-UniRule"/>
</dbReference>
<dbReference type="GO" id="GO:0006260">
    <property type="term" value="P:DNA replication"/>
    <property type="evidence" value="ECO:0007669"/>
    <property type="project" value="UniProtKB-UniRule"/>
</dbReference>
<dbReference type="GO" id="GO:0000731">
    <property type="term" value="P:DNA synthesis involved in DNA repair"/>
    <property type="evidence" value="ECO:0007669"/>
    <property type="project" value="TreeGrafter"/>
</dbReference>
<dbReference type="GO" id="GO:0006302">
    <property type="term" value="P:double-strand break repair"/>
    <property type="evidence" value="ECO:0007669"/>
    <property type="project" value="TreeGrafter"/>
</dbReference>
<dbReference type="GO" id="GO:0009432">
    <property type="term" value="P:SOS response"/>
    <property type="evidence" value="ECO:0007669"/>
    <property type="project" value="UniProtKB-UniRule"/>
</dbReference>
<dbReference type="Gene3D" id="3.40.50.300">
    <property type="entry name" value="P-loop containing nucleotide triphosphate hydrolases"/>
    <property type="match status" value="1"/>
</dbReference>
<dbReference type="Gene3D" id="1.20.1050.90">
    <property type="entry name" value="RecF/RecN/SMC, N-terminal domain"/>
    <property type="match status" value="1"/>
</dbReference>
<dbReference type="HAMAP" id="MF_00365">
    <property type="entry name" value="RecF"/>
    <property type="match status" value="1"/>
</dbReference>
<dbReference type="InterPro" id="IPR001238">
    <property type="entry name" value="DNA-binding_RecF"/>
</dbReference>
<dbReference type="InterPro" id="IPR018078">
    <property type="entry name" value="DNA-binding_RecF_CS"/>
</dbReference>
<dbReference type="InterPro" id="IPR027417">
    <property type="entry name" value="P-loop_NTPase"/>
</dbReference>
<dbReference type="InterPro" id="IPR003395">
    <property type="entry name" value="RecF/RecN/SMC_N"/>
</dbReference>
<dbReference type="InterPro" id="IPR042174">
    <property type="entry name" value="RecF_2"/>
</dbReference>
<dbReference type="NCBIfam" id="TIGR00611">
    <property type="entry name" value="recf"/>
    <property type="match status" value="1"/>
</dbReference>
<dbReference type="PANTHER" id="PTHR32182">
    <property type="entry name" value="DNA REPLICATION AND REPAIR PROTEIN RECF"/>
    <property type="match status" value="1"/>
</dbReference>
<dbReference type="PANTHER" id="PTHR32182:SF0">
    <property type="entry name" value="DNA REPLICATION AND REPAIR PROTEIN RECF"/>
    <property type="match status" value="1"/>
</dbReference>
<dbReference type="Pfam" id="PF02463">
    <property type="entry name" value="SMC_N"/>
    <property type="match status" value="1"/>
</dbReference>
<dbReference type="SUPFAM" id="SSF52540">
    <property type="entry name" value="P-loop containing nucleoside triphosphate hydrolases"/>
    <property type="match status" value="1"/>
</dbReference>
<dbReference type="PROSITE" id="PS00617">
    <property type="entry name" value="RECF_1"/>
    <property type="match status" value="1"/>
</dbReference>
<dbReference type="PROSITE" id="PS00618">
    <property type="entry name" value="RECF_2"/>
    <property type="match status" value="1"/>
</dbReference>
<organism>
    <name type="scientific">Rickettsia massiliae (strain Mtu5)</name>
    <dbReference type="NCBI Taxonomy" id="416276"/>
    <lineage>
        <taxon>Bacteria</taxon>
        <taxon>Pseudomonadati</taxon>
        <taxon>Pseudomonadota</taxon>
        <taxon>Alphaproteobacteria</taxon>
        <taxon>Rickettsiales</taxon>
        <taxon>Rickettsiaceae</taxon>
        <taxon>Rickettsieae</taxon>
        <taxon>Rickettsia</taxon>
        <taxon>spotted fever group</taxon>
    </lineage>
</organism>
<keyword id="KW-0067">ATP-binding</keyword>
<keyword id="KW-0963">Cytoplasm</keyword>
<keyword id="KW-0227">DNA damage</keyword>
<keyword id="KW-0234">DNA repair</keyword>
<keyword id="KW-0235">DNA replication</keyword>
<keyword id="KW-0238">DNA-binding</keyword>
<keyword id="KW-0547">Nucleotide-binding</keyword>
<keyword id="KW-0742">SOS response</keyword>
<sequence length="360" mass="41604">MKNIFLHSLSLENYRNFKNLELKTDNTPIILIGENGSGKTNILEAISLFYPGRGLRSAKLADICKTSEDHCLVKALLQSKLGLAEFTTQFKRSSNRRITEYNESKIANNELSKFTSMVWLTPHMEGIFTSSSSDRRKFLDRIVYNFDPKHTELVSKYEYYMHERNKILVEDIRDDNWLKIIEEKMADISNHIANNRLKTLEFMQHAIDDLENEFPKADLSIDGIVEQKILNGEENIVSFITAELYQTRNNDKLLGRTSFGVHKSDFLVKHQKKNILAKFCSTGEQKAILIAIILAEMNYAIKLTKIAPILLLDEVFVHLDDKRRQYLIEFFTGLNMQLWVTTTNLEGIENFATKAQLIKL</sequence>
<feature type="chain" id="PRO_1000059905" description="DNA replication and repair protein RecF">
    <location>
        <begin position="1"/>
        <end position="360"/>
    </location>
</feature>
<feature type="binding site" evidence="1">
    <location>
        <begin position="33"/>
        <end position="40"/>
    </location>
    <ligand>
        <name>ATP</name>
        <dbReference type="ChEBI" id="CHEBI:30616"/>
    </ligand>
</feature>
<accession>A8F0D4</accession>
<name>RECF_RICM5</name>
<gene>
    <name evidence="1" type="primary">recF</name>
    <name type="ordered locus">RMA_0033</name>
</gene>
<evidence type="ECO:0000255" key="1">
    <source>
        <dbReference type="HAMAP-Rule" id="MF_00365"/>
    </source>
</evidence>
<proteinExistence type="inferred from homology"/>
<protein>
    <recommendedName>
        <fullName evidence="1">DNA replication and repair protein RecF</fullName>
    </recommendedName>
</protein>